<gene>
    <name type="primary">alkB</name>
    <name type="synonym">aidD</name>
    <name type="ordered locus">b2212</name>
    <name type="ordered locus">JW2200</name>
</gene>
<protein>
    <recommendedName>
        <fullName>Alpha-ketoglutarate-dependent dioxygenase AlkB</fullName>
        <ecNumber>1.14.11.33</ecNumber>
    </recommendedName>
    <alternativeName>
        <fullName>Alkylated DNA repair protein AlkB</fullName>
    </alternativeName>
    <alternativeName>
        <fullName>DNA oxidative demethylase AlkB</fullName>
    </alternativeName>
</protein>
<sequence length="216" mass="24076">MLDLFADAEPWQEPLAAGAVILRRFAFNAAEQLIRDINDVASQSPFRQMVTPGGYTMSVAMTNCGHLGWTTHRQGYLYSPIDPQTNKPWPAMPQSFHNLCQRAATAAGYPDFQPDACLINRYAPGAKLSLHQDKDEPDLRAPIVSVSLGLPAIFQFGGLKRNDPLKRLLLEHGDVVVWGGESRLFYHGIQPLKAGFHPLTIDCRYNLTFRQAGKKE</sequence>
<comment type="function">
    <text evidence="2 3 4 5 6 7">Dioxygenase that repairs alkylated DNA and RNA containing 3-methylcytosine or 1-methyladenine by oxidative demethylation. Has highest activity towards 3-methylcytosine. Has lower activity towards alkylated DNA containing ethenoadenine, and no detectable activity towards 1-methylguanine or 3-methylthymine. Accepts double-stranded and single-stranded substrates. Requires molecular oxygen, alpha-ketoglutarate and iron. Provides extensive resistance to alkylating agents such as MMS and DMS (SN2 agents), but not to MMNG and MNU (SN1 agents).</text>
</comment>
<comment type="catalytic activity">
    <reaction evidence="2 6 7">
        <text>a methylated nucleobase within DNA + 2-oxoglutarate + O2 = a nucleobase within DNA + formaldehyde + succinate + CO2</text>
        <dbReference type="Rhea" id="RHEA:30299"/>
        <dbReference type="Rhea" id="RHEA-COMP:12192"/>
        <dbReference type="Rhea" id="RHEA-COMP:12193"/>
        <dbReference type="ChEBI" id="CHEBI:15379"/>
        <dbReference type="ChEBI" id="CHEBI:16526"/>
        <dbReference type="ChEBI" id="CHEBI:16810"/>
        <dbReference type="ChEBI" id="CHEBI:16842"/>
        <dbReference type="ChEBI" id="CHEBI:30031"/>
        <dbReference type="ChEBI" id="CHEBI:32875"/>
        <dbReference type="ChEBI" id="CHEBI:64428"/>
        <dbReference type="EC" id="1.14.11.33"/>
    </reaction>
</comment>
<comment type="cofactor">
    <cofactor evidence="1 4 5 6 7">
        <name>Fe(2+)</name>
        <dbReference type="ChEBI" id="CHEBI:29033"/>
    </cofactor>
    <text evidence="1 4 5 6 7">Binds 1 Fe(2+) ion per subunit.</text>
</comment>
<comment type="similarity">
    <text evidence="8">Belongs to the alkB family.</text>
</comment>
<evidence type="ECO:0000255" key="1">
    <source>
        <dbReference type="PROSITE-ProRule" id="PRU00805"/>
    </source>
</evidence>
<evidence type="ECO:0000269" key="2">
    <source>
    </source>
</evidence>
<evidence type="ECO:0000269" key="3">
    <source>
    </source>
</evidence>
<evidence type="ECO:0000269" key="4">
    <source>
    </source>
</evidence>
<evidence type="ECO:0000269" key="5">
    <source>
    </source>
</evidence>
<evidence type="ECO:0000269" key="6">
    <source>
    </source>
</evidence>
<evidence type="ECO:0000269" key="7">
    <source>
    </source>
</evidence>
<evidence type="ECO:0000305" key="8"/>
<evidence type="ECO:0007829" key="9">
    <source>
        <dbReference type="PDB" id="2FDK"/>
    </source>
</evidence>
<evidence type="ECO:0007829" key="10">
    <source>
        <dbReference type="PDB" id="4JHT"/>
    </source>
</evidence>
<evidence type="ECO:0007829" key="11">
    <source>
        <dbReference type="PDB" id="4NID"/>
    </source>
</evidence>
<organism>
    <name type="scientific">Escherichia coli (strain K12)</name>
    <dbReference type="NCBI Taxonomy" id="83333"/>
    <lineage>
        <taxon>Bacteria</taxon>
        <taxon>Pseudomonadati</taxon>
        <taxon>Pseudomonadota</taxon>
        <taxon>Gammaproteobacteria</taxon>
        <taxon>Enterobacterales</taxon>
        <taxon>Enterobacteriaceae</taxon>
        <taxon>Escherichia</taxon>
    </lineage>
</organism>
<dbReference type="EC" id="1.14.11.33"/>
<dbReference type="EMBL" id="J02607">
    <property type="protein sequence ID" value="AAA23416.1"/>
    <property type="molecule type" value="Genomic_DNA"/>
</dbReference>
<dbReference type="EMBL" id="U00008">
    <property type="protein sequence ID" value="AAA16409.1"/>
    <property type="molecule type" value="Genomic_DNA"/>
</dbReference>
<dbReference type="EMBL" id="U00096">
    <property type="protein sequence ID" value="AAC75272.1"/>
    <property type="molecule type" value="Genomic_DNA"/>
</dbReference>
<dbReference type="EMBL" id="AP009048">
    <property type="protein sequence ID" value="BAA15995.1"/>
    <property type="molecule type" value="Genomic_DNA"/>
</dbReference>
<dbReference type="EMBL" id="M10315">
    <property type="protein sequence ID" value="AAA23414.1"/>
    <property type="molecule type" value="Genomic_DNA"/>
</dbReference>
<dbReference type="PIR" id="A24605">
    <property type="entry name" value="BVECKB"/>
</dbReference>
<dbReference type="RefSeq" id="NP_416716.1">
    <property type="nucleotide sequence ID" value="NC_000913.3"/>
</dbReference>
<dbReference type="RefSeq" id="WP_000884971.1">
    <property type="nucleotide sequence ID" value="NZ_SSZK01000030.1"/>
</dbReference>
<dbReference type="PDB" id="2FD8">
    <property type="method" value="X-ray"/>
    <property type="resolution" value="2.30 A"/>
    <property type="chains" value="A=12-216"/>
</dbReference>
<dbReference type="PDB" id="2FDF">
    <property type="method" value="X-ray"/>
    <property type="resolution" value="2.10 A"/>
    <property type="chains" value="A=12-216"/>
</dbReference>
<dbReference type="PDB" id="2FDG">
    <property type="method" value="X-ray"/>
    <property type="resolution" value="2.20 A"/>
    <property type="chains" value="A=12-216"/>
</dbReference>
<dbReference type="PDB" id="2FDH">
    <property type="method" value="X-ray"/>
    <property type="resolution" value="2.10 A"/>
    <property type="chains" value="A=12-216"/>
</dbReference>
<dbReference type="PDB" id="2FDI">
    <property type="method" value="X-ray"/>
    <property type="resolution" value="1.80 A"/>
    <property type="chains" value="A=12-216"/>
</dbReference>
<dbReference type="PDB" id="2FDJ">
    <property type="method" value="X-ray"/>
    <property type="resolution" value="2.10 A"/>
    <property type="chains" value="A=12-216"/>
</dbReference>
<dbReference type="PDB" id="2FDK">
    <property type="method" value="X-ray"/>
    <property type="resolution" value="2.30 A"/>
    <property type="chains" value="A=12-216"/>
</dbReference>
<dbReference type="PDB" id="3BI3">
    <property type="method" value="X-ray"/>
    <property type="resolution" value="1.90 A"/>
    <property type="chains" value="A=13-213"/>
</dbReference>
<dbReference type="PDB" id="3BIE">
    <property type="method" value="X-ray"/>
    <property type="resolution" value="1.68 A"/>
    <property type="chains" value="A=13-214"/>
</dbReference>
<dbReference type="PDB" id="3BKZ">
    <property type="method" value="X-ray"/>
    <property type="resolution" value="1.65 A"/>
    <property type="chains" value="A=14-214"/>
</dbReference>
<dbReference type="PDB" id="3I2O">
    <property type="method" value="X-ray"/>
    <property type="resolution" value="1.70 A"/>
    <property type="chains" value="A=12-216"/>
</dbReference>
<dbReference type="PDB" id="3I3M">
    <property type="method" value="X-ray"/>
    <property type="resolution" value="1.50 A"/>
    <property type="chains" value="A=12-216"/>
</dbReference>
<dbReference type="PDB" id="3I3Q">
    <property type="method" value="X-ray"/>
    <property type="resolution" value="1.40 A"/>
    <property type="chains" value="A/B=12-216"/>
</dbReference>
<dbReference type="PDB" id="3I49">
    <property type="method" value="X-ray"/>
    <property type="resolution" value="1.60 A"/>
    <property type="chains" value="A=12-216"/>
</dbReference>
<dbReference type="PDB" id="3KHB">
    <property type="method" value="X-ray"/>
    <property type="resolution" value="2.90 A"/>
    <property type="chains" value="A/B=1-216"/>
</dbReference>
<dbReference type="PDB" id="3KHC">
    <property type="method" value="X-ray"/>
    <property type="resolution" value="2.20 A"/>
    <property type="chains" value="A/B=1-216"/>
</dbReference>
<dbReference type="PDB" id="3O1M">
    <property type="method" value="X-ray"/>
    <property type="resolution" value="1.75 A"/>
    <property type="chains" value="A=12-216"/>
</dbReference>
<dbReference type="PDB" id="3O1O">
    <property type="method" value="X-ray"/>
    <property type="resolution" value="1.92 A"/>
    <property type="chains" value="A=12-216"/>
</dbReference>
<dbReference type="PDB" id="3O1P">
    <property type="method" value="X-ray"/>
    <property type="resolution" value="1.51 A"/>
    <property type="chains" value="A=12-216"/>
</dbReference>
<dbReference type="PDB" id="3O1R">
    <property type="method" value="X-ray"/>
    <property type="resolution" value="1.77 A"/>
    <property type="chains" value="A=12-216"/>
</dbReference>
<dbReference type="PDB" id="3O1S">
    <property type="method" value="X-ray"/>
    <property type="resolution" value="1.58 A"/>
    <property type="chains" value="A=12-216"/>
</dbReference>
<dbReference type="PDB" id="3O1T">
    <property type="method" value="X-ray"/>
    <property type="resolution" value="1.48 A"/>
    <property type="chains" value="A=12-216"/>
</dbReference>
<dbReference type="PDB" id="3O1U">
    <property type="method" value="X-ray"/>
    <property type="resolution" value="1.54 A"/>
    <property type="chains" value="A=12-216"/>
</dbReference>
<dbReference type="PDB" id="3O1V">
    <property type="method" value="X-ray"/>
    <property type="resolution" value="1.90 A"/>
    <property type="chains" value="A=12-216"/>
</dbReference>
<dbReference type="PDB" id="3T3Y">
    <property type="method" value="X-ray"/>
    <property type="resolution" value="2.00 A"/>
    <property type="chains" value="A=12-216"/>
</dbReference>
<dbReference type="PDB" id="3T4H">
    <property type="method" value="X-ray"/>
    <property type="resolution" value="1.65 A"/>
    <property type="chains" value="B=12-216"/>
</dbReference>
<dbReference type="PDB" id="3T4V">
    <property type="method" value="X-ray"/>
    <property type="resolution" value="1.73 A"/>
    <property type="chains" value="A=12-216"/>
</dbReference>
<dbReference type="PDB" id="4JHT">
    <property type="method" value="X-ray"/>
    <property type="resolution" value="1.18 A"/>
    <property type="chains" value="A=12-216"/>
</dbReference>
<dbReference type="PDB" id="4NID">
    <property type="method" value="X-ray"/>
    <property type="resolution" value="1.58 A"/>
    <property type="chains" value="A=12-216"/>
</dbReference>
<dbReference type="PDB" id="4NIG">
    <property type="method" value="X-ray"/>
    <property type="resolution" value="1.52 A"/>
    <property type="chains" value="A=12-216"/>
</dbReference>
<dbReference type="PDB" id="4NIH">
    <property type="method" value="X-ray"/>
    <property type="resolution" value="1.37 A"/>
    <property type="chains" value="A=12-216"/>
</dbReference>
<dbReference type="PDB" id="4NII">
    <property type="method" value="X-ray"/>
    <property type="resolution" value="1.62 A"/>
    <property type="chains" value="A=12-216"/>
</dbReference>
<dbReference type="PDB" id="4RFR">
    <property type="method" value="X-ray"/>
    <property type="resolution" value="1.50 A"/>
    <property type="chains" value="B=14-216"/>
</dbReference>
<dbReference type="PDB" id="4ZHN">
    <property type="method" value="X-ray"/>
    <property type="resolution" value="1.33 A"/>
    <property type="chains" value="A=12-216"/>
</dbReference>
<dbReference type="PDB" id="6Y0Q">
    <property type="method" value="X-ray"/>
    <property type="resolution" value="1.75 A"/>
    <property type="chains" value="A=1-216"/>
</dbReference>
<dbReference type="PDB" id="6YPV">
    <property type="method" value="X-ray"/>
    <property type="resolution" value="2.10 A"/>
    <property type="chains" value="A=1-216"/>
</dbReference>
<dbReference type="PDB" id="7NRO">
    <property type="method" value="X-ray"/>
    <property type="resolution" value="1.25 A"/>
    <property type="chains" value="A=1-216"/>
</dbReference>
<dbReference type="PDBsum" id="2FD8"/>
<dbReference type="PDBsum" id="2FDF"/>
<dbReference type="PDBsum" id="2FDG"/>
<dbReference type="PDBsum" id="2FDH"/>
<dbReference type="PDBsum" id="2FDI"/>
<dbReference type="PDBsum" id="2FDJ"/>
<dbReference type="PDBsum" id="2FDK"/>
<dbReference type="PDBsum" id="3BI3"/>
<dbReference type="PDBsum" id="3BIE"/>
<dbReference type="PDBsum" id="3BKZ"/>
<dbReference type="PDBsum" id="3I2O"/>
<dbReference type="PDBsum" id="3I3M"/>
<dbReference type="PDBsum" id="3I3Q"/>
<dbReference type="PDBsum" id="3I49"/>
<dbReference type="PDBsum" id="3KHB"/>
<dbReference type="PDBsum" id="3KHC"/>
<dbReference type="PDBsum" id="3O1M"/>
<dbReference type="PDBsum" id="3O1O"/>
<dbReference type="PDBsum" id="3O1P"/>
<dbReference type="PDBsum" id="3O1R"/>
<dbReference type="PDBsum" id="3O1S"/>
<dbReference type="PDBsum" id="3O1T"/>
<dbReference type="PDBsum" id="3O1U"/>
<dbReference type="PDBsum" id="3O1V"/>
<dbReference type="PDBsum" id="3T3Y"/>
<dbReference type="PDBsum" id="3T4H"/>
<dbReference type="PDBsum" id="3T4V"/>
<dbReference type="PDBsum" id="4JHT"/>
<dbReference type="PDBsum" id="4NID"/>
<dbReference type="PDBsum" id="4NIG"/>
<dbReference type="PDBsum" id="4NIH"/>
<dbReference type="PDBsum" id="4NII"/>
<dbReference type="PDBsum" id="4RFR"/>
<dbReference type="PDBsum" id="4ZHN"/>
<dbReference type="PDBsum" id="6Y0Q"/>
<dbReference type="PDBsum" id="6YPV"/>
<dbReference type="PDBsum" id="7NRO"/>
<dbReference type="SMR" id="P05050"/>
<dbReference type="BioGRID" id="4261918">
    <property type="interactions" value="41"/>
</dbReference>
<dbReference type="BioGRID" id="851049">
    <property type="interactions" value="1"/>
</dbReference>
<dbReference type="DIP" id="DIP-9085N"/>
<dbReference type="FunCoup" id="P05050">
    <property type="interactions" value="31"/>
</dbReference>
<dbReference type="IntAct" id="P05050">
    <property type="interactions" value="12"/>
</dbReference>
<dbReference type="STRING" id="511145.b2212"/>
<dbReference type="BindingDB" id="P05050"/>
<dbReference type="ChEMBL" id="CHEMBL5291506"/>
<dbReference type="PaxDb" id="511145-b2212"/>
<dbReference type="EnsemblBacteria" id="AAC75272">
    <property type="protein sequence ID" value="AAC75272"/>
    <property type="gene ID" value="b2212"/>
</dbReference>
<dbReference type="GeneID" id="946708"/>
<dbReference type="KEGG" id="ecj:JW2200"/>
<dbReference type="KEGG" id="eco:b2212"/>
<dbReference type="KEGG" id="ecoc:C3026_12360"/>
<dbReference type="PATRIC" id="fig|1411691.4.peg.23"/>
<dbReference type="EchoBASE" id="EB0036"/>
<dbReference type="eggNOG" id="COG3145">
    <property type="taxonomic scope" value="Bacteria"/>
</dbReference>
<dbReference type="HOGENOM" id="CLU_039677_1_1_6"/>
<dbReference type="InParanoid" id="P05050"/>
<dbReference type="OMA" id="CLINRYQ"/>
<dbReference type="OrthoDB" id="9796932at2"/>
<dbReference type="PhylomeDB" id="P05050"/>
<dbReference type="BioCyc" id="EcoCyc:EG10037-MONOMER"/>
<dbReference type="BioCyc" id="MetaCyc:EG10037-MONOMER"/>
<dbReference type="BRENDA" id="1.14.11.33">
    <property type="organism ID" value="2026"/>
</dbReference>
<dbReference type="BRENDA" id="1.14.11.54">
    <property type="organism ID" value="2026"/>
</dbReference>
<dbReference type="EvolutionaryTrace" id="P05050"/>
<dbReference type="PRO" id="PR:P05050"/>
<dbReference type="Proteomes" id="UP000000625">
    <property type="component" value="Chromosome"/>
</dbReference>
<dbReference type="GO" id="GO:0005737">
    <property type="term" value="C:cytoplasm"/>
    <property type="evidence" value="ECO:0000318"/>
    <property type="project" value="GO_Central"/>
</dbReference>
<dbReference type="GO" id="GO:0005829">
    <property type="term" value="C:cytosol"/>
    <property type="evidence" value="ECO:0000305"/>
    <property type="project" value="EcoCyc"/>
</dbReference>
<dbReference type="GO" id="GO:0035516">
    <property type="term" value="F:broad specificity oxidative DNA demethylase activity"/>
    <property type="evidence" value="ECO:0000314"/>
    <property type="project" value="UniProtKB"/>
</dbReference>
<dbReference type="GO" id="GO:0051213">
    <property type="term" value="F:dioxygenase activity"/>
    <property type="evidence" value="ECO:0000314"/>
    <property type="project" value="EcoliWiki"/>
</dbReference>
<dbReference type="GO" id="GO:0008198">
    <property type="term" value="F:ferrous iron binding"/>
    <property type="evidence" value="ECO:0000314"/>
    <property type="project" value="UniProtKB"/>
</dbReference>
<dbReference type="GO" id="GO:0035515">
    <property type="term" value="F:oxidative RNA demethylase activity"/>
    <property type="evidence" value="ECO:0000314"/>
    <property type="project" value="UniProtKB"/>
</dbReference>
<dbReference type="GO" id="GO:0006307">
    <property type="term" value="P:DNA alkylation repair"/>
    <property type="evidence" value="ECO:0000314"/>
    <property type="project" value="UniProtKB"/>
</dbReference>
<dbReference type="GO" id="GO:0006281">
    <property type="term" value="P:DNA repair"/>
    <property type="evidence" value="ECO:0000315"/>
    <property type="project" value="EcoCyc"/>
</dbReference>
<dbReference type="GO" id="GO:0070989">
    <property type="term" value="P:oxidative demethylation"/>
    <property type="evidence" value="ECO:0000314"/>
    <property type="project" value="EcoliWiki"/>
</dbReference>
<dbReference type="GO" id="GO:0035513">
    <property type="term" value="P:oxidative RNA demethylation"/>
    <property type="evidence" value="ECO:0000318"/>
    <property type="project" value="GO_Central"/>
</dbReference>
<dbReference type="GO" id="GO:0072702">
    <property type="term" value="P:response to methyl methanesulfonate"/>
    <property type="evidence" value="ECO:0000315"/>
    <property type="project" value="EcoCyc"/>
</dbReference>
<dbReference type="GO" id="GO:0042245">
    <property type="term" value="P:RNA repair"/>
    <property type="evidence" value="ECO:0000314"/>
    <property type="project" value="UniProtKB"/>
</dbReference>
<dbReference type="FunFam" id="2.60.120.590:FF:000005">
    <property type="entry name" value="Alpha-ketoglutarate-dependent dioxygenase AlkB"/>
    <property type="match status" value="1"/>
</dbReference>
<dbReference type="Gene3D" id="2.60.120.590">
    <property type="entry name" value="Alpha-ketoglutarate-dependent dioxygenase AlkB-like"/>
    <property type="match status" value="1"/>
</dbReference>
<dbReference type="InterPro" id="IPR004574">
    <property type="entry name" value="Alkb"/>
</dbReference>
<dbReference type="InterPro" id="IPR027450">
    <property type="entry name" value="AlkB-like"/>
</dbReference>
<dbReference type="InterPro" id="IPR037151">
    <property type="entry name" value="AlkB-like_sf"/>
</dbReference>
<dbReference type="InterPro" id="IPR005123">
    <property type="entry name" value="Oxoglu/Fe-dep_dioxygenase_dom"/>
</dbReference>
<dbReference type="NCBIfam" id="TIGR00568">
    <property type="entry name" value="alkb"/>
    <property type="match status" value="1"/>
</dbReference>
<dbReference type="NCBIfam" id="NF011930">
    <property type="entry name" value="PRK15401.1"/>
    <property type="match status" value="1"/>
</dbReference>
<dbReference type="PANTHER" id="PTHR16557">
    <property type="entry name" value="ALKYLATED DNA REPAIR PROTEIN ALKB-RELATED"/>
    <property type="match status" value="1"/>
</dbReference>
<dbReference type="PANTHER" id="PTHR16557:SF2">
    <property type="entry name" value="NUCLEIC ACID DIOXYGENASE ALKBH1"/>
    <property type="match status" value="1"/>
</dbReference>
<dbReference type="Pfam" id="PF13532">
    <property type="entry name" value="2OG-FeII_Oxy_2"/>
    <property type="match status" value="1"/>
</dbReference>
<dbReference type="SUPFAM" id="SSF51197">
    <property type="entry name" value="Clavaminate synthase-like"/>
    <property type="match status" value="1"/>
</dbReference>
<dbReference type="PROSITE" id="PS51471">
    <property type="entry name" value="FE2OG_OXY"/>
    <property type="match status" value="1"/>
</dbReference>
<proteinExistence type="evidence at protein level"/>
<accession>P05050</accession>
<reference key="1">
    <citation type="journal article" date="1986" name="J. Biol. Chem.">
        <title>Structure and expression of the alkB gene of Escherichia coli related to the repair of alkylated DNA.</title>
        <authorList>
            <person name="Kondo H."/>
            <person name="Nakabeppu Y."/>
            <person name="Kataoka H."/>
            <person name="Kuhara S."/>
            <person name="Kawabata S."/>
            <person name="Sekiguchi M."/>
        </authorList>
    </citation>
    <scope>NUCLEOTIDE SEQUENCE [GENOMIC DNA]</scope>
    <scope>PROTEIN SEQUENCE OF 1-30</scope>
</reference>
<reference key="2">
    <citation type="submission" date="1993-10" db="EMBL/GenBank/DDBJ databases">
        <title>Automated multiplex sequencing of the E.coli genome.</title>
        <authorList>
            <person name="Richterich P."/>
            <person name="Lakey N."/>
            <person name="Gryan G."/>
            <person name="Jaehn L."/>
            <person name="Mintz L."/>
            <person name="Robison K."/>
            <person name="Church G.M."/>
        </authorList>
    </citation>
    <scope>NUCLEOTIDE SEQUENCE [LARGE SCALE GENOMIC DNA]</scope>
    <source>
        <strain>K12 / BHB2600</strain>
    </source>
</reference>
<reference key="3">
    <citation type="journal article" date="1996" name="DNA Res.">
        <title>A 460-kb DNA sequence of the Escherichia coli K-12 genome corresponding to the 40.1-50.0 min region on the linkage map.</title>
        <authorList>
            <person name="Itoh T."/>
            <person name="Aiba H."/>
            <person name="Baba T."/>
            <person name="Fujita K."/>
            <person name="Hayashi K."/>
            <person name="Inada T."/>
            <person name="Isono K."/>
            <person name="Kasai H."/>
            <person name="Kimura S."/>
            <person name="Kitakawa M."/>
            <person name="Kitagawa M."/>
            <person name="Makino K."/>
            <person name="Miki T."/>
            <person name="Mizobuchi K."/>
            <person name="Mori H."/>
            <person name="Mori T."/>
            <person name="Motomura K."/>
            <person name="Nakade S."/>
            <person name="Nakamura Y."/>
            <person name="Nashimoto H."/>
            <person name="Nishio Y."/>
            <person name="Oshima T."/>
            <person name="Saito N."/>
            <person name="Sampei G."/>
            <person name="Seki Y."/>
            <person name="Sivasundaram S."/>
            <person name="Tagami H."/>
            <person name="Takeda J."/>
            <person name="Takemoto K."/>
            <person name="Wada C."/>
            <person name="Yamamoto Y."/>
            <person name="Horiuchi T."/>
        </authorList>
    </citation>
    <scope>NUCLEOTIDE SEQUENCE [LARGE SCALE GENOMIC DNA]</scope>
    <source>
        <strain>K12 / W3110 / ATCC 27325 / DSM 5911</strain>
    </source>
</reference>
<reference key="4">
    <citation type="journal article" date="1997" name="Science">
        <title>The complete genome sequence of Escherichia coli K-12.</title>
        <authorList>
            <person name="Blattner F.R."/>
            <person name="Plunkett G. III"/>
            <person name="Bloch C.A."/>
            <person name="Perna N.T."/>
            <person name="Burland V."/>
            <person name="Riley M."/>
            <person name="Collado-Vides J."/>
            <person name="Glasner J.D."/>
            <person name="Rode C.K."/>
            <person name="Mayhew G.F."/>
            <person name="Gregor J."/>
            <person name="Davis N.W."/>
            <person name="Kirkpatrick H.A."/>
            <person name="Goeden M.A."/>
            <person name="Rose D.J."/>
            <person name="Mau B."/>
            <person name="Shao Y."/>
        </authorList>
    </citation>
    <scope>NUCLEOTIDE SEQUENCE [LARGE SCALE GENOMIC DNA]</scope>
    <source>
        <strain>K12 / MG1655 / ATCC 47076</strain>
    </source>
</reference>
<reference key="5">
    <citation type="journal article" date="2006" name="Mol. Syst. Biol.">
        <title>Highly accurate genome sequences of Escherichia coli K-12 strains MG1655 and W3110.</title>
        <authorList>
            <person name="Hayashi K."/>
            <person name="Morooka N."/>
            <person name="Yamamoto Y."/>
            <person name="Fujita K."/>
            <person name="Isono K."/>
            <person name="Choi S."/>
            <person name="Ohtsubo E."/>
            <person name="Baba T."/>
            <person name="Wanner B.L."/>
            <person name="Mori H."/>
            <person name="Horiuchi T."/>
        </authorList>
    </citation>
    <scope>NUCLEOTIDE SEQUENCE [LARGE SCALE GENOMIC DNA]</scope>
    <source>
        <strain>K12 / W3110 / ATCC 27325 / DSM 5911</strain>
    </source>
</reference>
<reference key="6">
    <citation type="journal article" date="1985" name="Proc. Natl. Acad. Sci. U.S.A.">
        <title>Active site and complete sequence of the suicidal methyltransferase that counters alkylation mutagenesis.</title>
        <authorList>
            <person name="Demple B."/>
            <person name="Sedgwick B."/>
            <person name="Robins P."/>
            <person name="Totty N."/>
            <person name="Waterfield M.D."/>
            <person name="Lindahl T."/>
        </authorList>
    </citation>
    <scope>NUCLEOTIDE SEQUENCE [GENOMIC DNA] OF 1-53</scope>
    <source>
        <strain>B</strain>
    </source>
</reference>
<reference key="7">
    <citation type="journal article" date="1994" name="J. Bacteriol.">
        <title>The Escherichia coli AlkB protein protects human cells against alkylation-induced toxicity.</title>
        <authorList>
            <person name="Chen B.J."/>
            <person name="Carroll P."/>
            <person name="Samson L."/>
        </authorList>
    </citation>
    <scope>CHARACTERIZATION</scope>
</reference>
<reference key="8">
    <citation type="journal article" date="2002" name="Nature">
        <title>AlkB-mediated oxidative demethylation reverses DNA damage in Escherichia coli.</title>
        <authorList>
            <person name="Falnes P.O."/>
            <person name="Johansen R.F."/>
            <person name="Seeberg E."/>
        </authorList>
    </citation>
    <scope>CATALYTIC ACTIVITY</scope>
    <scope>FUNCTION</scope>
</reference>
<reference key="9">
    <citation type="journal article" date="2003" name="Nature">
        <title>Human and bacterial oxidative demethylases repair alkylation damage in both RNA and DNA.</title>
        <authorList>
            <person name="Aas P.A."/>
            <person name="Otterlei M."/>
            <person name="Falnes P.O."/>
            <person name="Vaagboe C.B."/>
            <person name="Skorpen F."/>
            <person name="Akbari M."/>
            <person name="Sundheim O."/>
            <person name="Bjoeraas M."/>
            <person name="Slupphaug G."/>
            <person name="Seeberg E."/>
            <person name="Krokan H.E."/>
        </authorList>
    </citation>
    <scope>FUNCTION</scope>
</reference>
<reference key="10">
    <citation type="journal article" date="2006" name="Nature">
        <title>Crystal structures of catalytic complexes of the oxidative DNA/RNA repair enzyme AlkB.</title>
        <authorList>
            <person name="Yu B."/>
            <person name="Edstrom W.C."/>
            <person name="Benach J."/>
            <person name="Hamuro Y."/>
            <person name="Weber P.C."/>
            <person name="Gibney B.R."/>
            <person name="Hunt J.F."/>
        </authorList>
    </citation>
    <scope>X-RAY CRYSTALLOGRAPHY (1.8 ANGSTROMS) OF 12-216 IN COMPLEX WITH SUBSTRATE; ALPHA-KETOGLUTARATE AND IRON</scope>
    <scope>FUNCTION</scope>
    <scope>COFACTOR</scope>
</reference>
<reference key="11">
    <citation type="journal article" date="2008" name="Nature">
        <title>Crystal structures of DNA/RNA repair enzymes AlkB and ABH2 bound to dsDNA.</title>
        <authorList>
            <person name="Yang C.G."/>
            <person name="Yi C."/>
            <person name="Duguid E.M."/>
            <person name="Sullivan C.T."/>
            <person name="Jian X."/>
            <person name="Rice P.A."/>
            <person name="He C."/>
        </authorList>
    </citation>
    <scope>X-RAY CRYSTALLOGRAPHY (1.65 ANGSTROMS) OF 14-214 IN COMPLEX WITH DS-DNA; ALPHA-KETOGLUTARATE AND METAL IONS</scope>
</reference>
<reference key="12">
    <citation type="journal article" date="2009" name="Proc. Natl. Acad. Sci. U.S.A.">
        <title>Enzymological and structural studies of the mechanism of promiscuous substrate recognition by the oxidative DNA repair enzyme AlkB.</title>
        <authorList>
            <person name="Yu B."/>
            <person name="Hunt J.F."/>
        </authorList>
    </citation>
    <scope>X-RAY CRYSTALLOGRAPHY (1.4 ANGSTROMS) OF 12-216 IN COMPLEXES WITH TRINUCLEOTIDE SUBSTRATES; ALPHA-KETOGLUTARATE AND METAL IONS</scope>
    <scope>COFACTOR</scope>
    <scope>FUNCTION</scope>
</reference>
<reference key="13">
    <citation type="journal article" date="2010" name="Nature">
        <title>Iron-catalysed oxidation intermediates captured in a DNA repair dioxygenase.</title>
        <authorList>
            <person name="Yi C."/>
            <person name="Jia G."/>
            <person name="Hou G."/>
            <person name="Dai Q."/>
            <person name="Zhang W."/>
            <person name="Zheng G."/>
            <person name="Jian X."/>
            <person name="Yang C.G."/>
            <person name="Cui Q."/>
            <person name="He C."/>
        </authorList>
    </citation>
    <scope>X-RAY CRYSTALLOGRAPHY (1.92 ANGSTROMS) OF 12-216 IN COMPLEXES WITH REACTION INTERMEDIATES; 2-OXOGLUTARIC ACID AND IRON</scope>
    <scope>CATALYTIC ACTIVITY</scope>
    <scope>FUNCTION</scope>
    <scope>COFACTOR</scope>
</reference>
<reference key="14">
    <citation type="journal article" date="2010" name="PLoS ONE">
        <title>Structural and mutational analysis of Escherichia coli AlkB provides insight into substrate specificity and DNA damage searching.</title>
        <authorList>
            <person name="Holland P.J."/>
            <person name="Hollis T."/>
        </authorList>
    </citation>
    <scope>X-RAY CRYSTALLOGRAPHY (2.20 ANGSTROMS) OF MUTANT ALA-135 IN COMPLEX WITH 2-OXOGLUTARIC ACID AND SUBSTRATE</scope>
    <scope>CATALYTIC ACTIVITY</scope>
    <scope>FUNCTION</scope>
    <scope>COFACTOR</scope>
    <scope>MUTAGENESIS OF THR-51; TRP-69; TYR-76; ASP-135 AND ARG-161</scope>
</reference>
<name>ALKB_ECOLI</name>
<keyword id="KW-0002">3D-structure</keyword>
<keyword id="KW-0223">Dioxygenase</keyword>
<keyword id="KW-0903">Direct protein sequencing</keyword>
<keyword id="KW-0227">DNA damage</keyword>
<keyword id="KW-0234">DNA repair</keyword>
<keyword id="KW-0408">Iron</keyword>
<keyword id="KW-0479">Metal-binding</keyword>
<keyword id="KW-0560">Oxidoreductase</keyword>
<keyword id="KW-1185">Reference proteome</keyword>
<feature type="chain" id="PRO_0000066665" description="Alpha-ketoglutarate-dependent dioxygenase AlkB">
    <location>
        <begin position="1"/>
        <end position="216"/>
    </location>
</feature>
<feature type="domain" description="Fe2OG dioxygenase" evidence="1">
    <location>
        <begin position="113"/>
        <end position="213"/>
    </location>
</feature>
<feature type="binding site" evidence="4 6">
    <location>
        <position position="69"/>
    </location>
    <ligand>
        <name>substrate</name>
    </ligand>
</feature>
<feature type="binding site">
    <location>
        <begin position="76"/>
        <end position="78"/>
    </location>
    <ligand>
        <name>substrate</name>
    </ligand>
</feature>
<feature type="binding site">
    <location>
        <begin position="120"/>
        <end position="122"/>
    </location>
    <ligand>
        <name>2-oxoglutarate</name>
        <dbReference type="ChEBI" id="CHEBI:16810"/>
    </ligand>
</feature>
<feature type="binding site" evidence="1 4">
    <location>
        <position position="131"/>
    </location>
    <ligand>
        <name>Fe cation</name>
        <dbReference type="ChEBI" id="CHEBI:24875"/>
        <note>catalytic</note>
    </ligand>
</feature>
<feature type="binding site" evidence="1 4">
    <location>
        <position position="133"/>
    </location>
    <ligand>
        <name>Fe cation</name>
        <dbReference type="ChEBI" id="CHEBI:24875"/>
        <note>catalytic</note>
    </ligand>
</feature>
<feature type="binding site" evidence="4 6">
    <location>
        <position position="135"/>
    </location>
    <ligand>
        <name>substrate</name>
    </ligand>
</feature>
<feature type="binding site" evidence="4 6">
    <location>
        <position position="161"/>
    </location>
    <ligand>
        <name>substrate</name>
    </ligand>
</feature>
<feature type="binding site" evidence="1 4">
    <location>
        <position position="187"/>
    </location>
    <ligand>
        <name>Fe cation</name>
        <dbReference type="ChEBI" id="CHEBI:24875"/>
        <note>catalytic</note>
    </ligand>
</feature>
<feature type="binding site">
    <location>
        <begin position="204"/>
        <end position="210"/>
    </location>
    <ligand>
        <name>2-oxoglutarate</name>
        <dbReference type="ChEBI" id="CHEBI:16810"/>
    </ligand>
</feature>
<feature type="mutagenesis site" description="Slightly reduced activity towards single-stranded DNA containing 1-methyladenine. Reduces affinity for undamaged DNA." evidence="6">
    <original>T</original>
    <variation>A</variation>
    <location>
        <position position="51"/>
    </location>
</feature>
<feature type="mutagenesis site" description="Abolishes activity towards single-stranded DNA containing 1-methyladenine." evidence="6">
    <original>W</original>
    <variation>A</variation>
    <location>
        <position position="69"/>
    </location>
</feature>
<feature type="mutagenesis site" description="Reduces affinity for damaged DNA and activity towards single-stranded DNA containing 1-methyladenine." evidence="6">
    <original>Y</original>
    <variation>A</variation>
    <location>
        <position position="76"/>
    </location>
</feature>
<feature type="mutagenesis site" description="Abolishes activity towards single-stranded DNA containing 1-methyladenine. Alters substrate specificity, so that the enzyme gains activity towards single-stranded DNA containing 1-methylguanine." evidence="6">
    <original>D</original>
    <variation>A</variation>
    <location>
        <position position="135"/>
    </location>
</feature>
<feature type="mutagenesis site" description="No effect on enzyme activity. Decreases affinity for damaged DNA." evidence="6">
    <original>R</original>
    <variation>A</variation>
    <location>
        <position position="161"/>
    </location>
</feature>
<feature type="strand" evidence="11">
    <location>
        <begin position="13"/>
        <end position="16"/>
    </location>
</feature>
<feature type="strand" evidence="10">
    <location>
        <begin position="19"/>
        <end position="22"/>
    </location>
</feature>
<feature type="turn" evidence="10">
    <location>
        <begin position="23"/>
        <end position="29"/>
    </location>
</feature>
<feature type="helix" evidence="10">
    <location>
        <begin position="30"/>
        <end position="43"/>
    </location>
</feature>
<feature type="strand" evidence="10">
    <location>
        <begin position="58"/>
        <end position="72"/>
    </location>
</feature>
<feature type="strand" evidence="10">
    <location>
        <begin position="75"/>
        <end position="81"/>
    </location>
</feature>
<feature type="turn" evidence="10">
    <location>
        <begin position="83"/>
        <end position="85"/>
    </location>
</feature>
<feature type="strand" evidence="10">
    <location>
        <begin position="86"/>
        <end position="88"/>
    </location>
</feature>
<feature type="helix" evidence="10">
    <location>
        <begin position="94"/>
        <end position="106"/>
    </location>
</feature>
<feature type="strand" evidence="10">
    <location>
        <begin position="115"/>
        <end position="122"/>
    </location>
</feature>
<feature type="strand" evidence="10">
    <location>
        <begin position="128"/>
        <end position="131"/>
    </location>
</feature>
<feature type="strand" evidence="10">
    <location>
        <begin position="143"/>
        <end position="150"/>
    </location>
</feature>
<feature type="strand" evidence="10">
    <location>
        <begin position="152"/>
        <end position="156"/>
    </location>
</feature>
<feature type="strand" evidence="9">
    <location>
        <begin position="158"/>
        <end position="163"/>
    </location>
</feature>
<feature type="strand" evidence="10">
    <location>
        <begin position="166"/>
        <end position="170"/>
    </location>
</feature>
<feature type="strand" evidence="10">
    <location>
        <begin position="175"/>
        <end position="178"/>
    </location>
</feature>
<feature type="helix" evidence="10">
    <location>
        <begin position="180"/>
        <end position="184"/>
    </location>
</feature>
<feature type="strand" evidence="10">
    <location>
        <begin position="187"/>
        <end position="189"/>
    </location>
</feature>
<feature type="turn" evidence="10">
    <location>
        <begin position="198"/>
        <end position="200"/>
    </location>
</feature>
<feature type="strand" evidence="10">
    <location>
        <begin position="204"/>
        <end position="209"/>
    </location>
</feature>